<proteinExistence type="inferred from homology"/>
<keyword id="KW-0067">ATP-binding</keyword>
<keyword id="KW-0963">Cytoplasm</keyword>
<keyword id="KW-1015">Disulfide bond</keyword>
<keyword id="KW-0547">Nucleotide-binding</keyword>
<keyword id="KW-1185">Reference proteome</keyword>
<keyword id="KW-0694">RNA-binding</keyword>
<keyword id="KW-0808">Transferase</keyword>
<keyword id="KW-0819">tRNA processing</keyword>
<keyword id="KW-0820">tRNA-binding</keyword>
<feature type="chain" id="PRO_0000121630" description="tRNA-specific 2-thiouridylase MnmA">
    <location>
        <begin position="1"/>
        <end position="365"/>
    </location>
</feature>
<feature type="region of interest" description="Interaction with tRNA" evidence="1">
    <location>
        <begin position="149"/>
        <end position="151"/>
    </location>
</feature>
<feature type="active site" description="Nucleophile" evidence="1">
    <location>
        <position position="101"/>
    </location>
</feature>
<feature type="active site" description="Cysteine persulfide intermediate" evidence="1">
    <location>
        <position position="199"/>
    </location>
</feature>
<feature type="binding site" evidence="1">
    <location>
        <begin position="6"/>
        <end position="13"/>
    </location>
    <ligand>
        <name>ATP</name>
        <dbReference type="ChEBI" id="CHEBI:30616"/>
    </ligand>
</feature>
<feature type="binding site" evidence="1">
    <location>
        <position position="32"/>
    </location>
    <ligand>
        <name>ATP</name>
        <dbReference type="ChEBI" id="CHEBI:30616"/>
    </ligand>
</feature>
<feature type="binding site" evidence="1">
    <location>
        <position position="125"/>
    </location>
    <ligand>
        <name>ATP</name>
        <dbReference type="ChEBI" id="CHEBI:30616"/>
    </ligand>
</feature>
<feature type="site" description="Interaction with tRNA" evidence="1">
    <location>
        <position position="126"/>
    </location>
</feature>
<feature type="site" description="Interaction with tRNA" evidence="1">
    <location>
        <position position="340"/>
    </location>
</feature>
<feature type="disulfide bond" description="Alternate" evidence="1">
    <location>
        <begin position="101"/>
        <end position="199"/>
    </location>
</feature>
<name>MNMA_CORGL</name>
<sequence>MRVLAAMSGGVDSAVAASRAVAAGHEVVGVHLALSQDPQTVRESSRGCCSLEDSADARRVCDKLGIPFYVWDFSDRFKEDVIDNFIDSYAIGETPNPCLRCNEKIKFAALLERGIALGFDAVVTGHYARLTQPADGGDGYLRRGVDPNKDQSYVLGVLGAHEIEHCMFPVGDTIKPEIREEASAAGFSVAKKPDSYDICFIPDGNTQAFLGKHIGMRPGMIVDQEGTQLREHAGVHEFTIGQRKGLDIKAPAADGRPRYVTDIDAKTGTVTVGTRENLKISTIHADRLKFLHPAMDGQIDCEVQVRAHGGVVSCSATIDRDADFMVLNLNEPLQGVARGQAAVLYLPDADGDIVLGSGTICHTES</sequence>
<protein>
    <recommendedName>
        <fullName evidence="1">tRNA-specific 2-thiouridylase MnmA</fullName>
        <ecNumber evidence="1">2.8.1.13</ecNumber>
    </recommendedName>
</protein>
<organism>
    <name type="scientific">Corynebacterium glutamicum (strain ATCC 13032 / DSM 20300 / JCM 1318 / BCRC 11384 / CCUG 27702 / LMG 3730 / NBRC 12168 / NCIMB 10025 / NRRL B-2784 / 534)</name>
    <dbReference type="NCBI Taxonomy" id="196627"/>
    <lineage>
        <taxon>Bacteria</taxon>
        <taxon>Bacillati</taxon>
        <taxon>Actinomycetota</taxon>
        <taxon>Actinomycetes</taxon>
        <taxon>Mycobacteriales</taxon>
        <taxon>Corynebacteriaceae</taxon>
        <taxon>Corynebacterium</taxon>
    </lineage>
</organism>
<dbReference type="EC" id="2.8.1.13" evidence="1"/>
<dbReference type="EMBL" id="BA000036">
    <property type="protein sequence ID" value="BAB98633.1"/>
    <property type="molecule type" value="Genomic_DNA"/>
</dbReference>
<dbReference type="EMBL" id="BX927151">
    <property type="protein sequence ID" value="CAF19943.1"/>
    <property type="molecule type" value="Genomic_DNA"/>
</dbReference>
<dbReference type="RefSeq" id="NP_600463.1">
    <property type="nucleotide sequence ID" value="NC_003450.3"/>
</dbReference>
<dbReference type="RefSeq" id="WP_003861382.1">
    <property type="nucleotide sequence ID" value="NC_006958.1"/>
</dbReference>
<dbReference type="SMR" id="Q8NR24"/>
<dbReference type="STRING" id="196627.cg1397"/>
<dbReference type="GeneID" id="1019222"/>
<dbReference type="KEGG" id="cgb:cg1397"/>
<dbReference type="KEGG" id="cgl:Cgl1240"/>
<dbReference type="PATRIC" id="fig|196627.13.peg.1217"/>
<dbReference type="eggNOG" id="COG0482">
    <property type="taxonomic scope" value="Bacteria"/>
</dbReference>
<dbReference type="HOGENOM" id="CLU_035188_0_2_11"/>
<dbReference type="OrthoDB" id="9800696at2"/>
<dbReference type="BioCyc" id="CORYNE:G18NG-10813-MONOMER"/>
<dbReference type="Proteomes" id="UP000000582">
    <property type="component" value="Chromosome"/>
</dbReference>
<dbReference type="Proteomes" id="UP000001009">
    <property type="component" value="Chromosome"/>
</dbReference>
<dbReference type="GO" id="GO:0005737">
    <property type="term" value="C:cytoplasm"/>
    <property type="evidence" value="ECO:0007669"/>
    <property type="project" value="UniProtKB-SubCell"/>
</dbReference>
<dbReference type="GO" id="GO:0005524">
    <property type="term" value="F:ATP binding"/>
    <property type="evidence" value="ECO:0007669"/>
    <property type="project" value="UniProtKB-KW"/>
</dbReference>
<dbReference type="GO" id="GO:0000049">
    <property type="term" value="F:tRNA binding"/>
    <property type="evidence" value="ECO:0007669"/>
    <property type="project" value="UniProtKB-KW"/>
</dbReference>
<dbReference type="GO" id="GO:0103016">
    <property type="term" value="F:tRNA-uridine 2-sulfurtransferase activity"/>
    <property type="evidence" value="ECO:0007669"/>
    <property type="project" value="UniProtKB-EC"/>
</dbReference>
<dbReference type="GO" id="GO:0002143">
    <property type="term" value="P:tRNA wobble position uridine thiolation"/>
    <property type="evidence" value="ECO:0007669"/>
    <property type="project" value="TreeGrafter"/>
</dbReference>
<dbReference type="CDD" id="cd01998">
    <property type="entry name" value="MnmA_TRMU-like"/>
    <property type="match status" value="1"/>
</dbReference>
<dbReference type="FunFam" id="2.30.30.280:FF:000001">
    <property type="entry name" value="tRNA-specific 2-thiouridylase MnmA"/>
    <property type="match status" value="1"/>
</dbReference>
<dbReference type="FunFam" id="3.40.50.620:FF:000057">
    <property type="entry name" value="tRNA-specific 2-thiouridylase MnmA"/>
    <property type="match status" value="1"/>
</dbReference>
<dbReference type="Gene3D" id="2.30.30.280">
    <property type="entry name" value="Adenine nucleotide alpha hydrolases-like domains"/>
    <property type="match status" value="1"/>
</dbReference>
<dbReference type="Gene3D" id="3.40.50.620">
    <property type="entry name" value="HUPs"/>
    <property type="match status" value="1"/>
</dbReference>
<dbReference type="Gene3D" id="2.40.30.10">
    <property type="entry name" value="Translation factors"/>
    <property type="match status" value="1"/>
</dbReference>
<dbReference type="HAMAP" id="MF_00144">
    <property type="entry name" value="tRNA_thiouridyl_MnmA"/>
    <property type="match status" value="1"/>
</dbReference>
<dbReference type="InterPro" id="IPR004506">
    <property type="entry name" value="MnmA-like"/>
</dbReference>
<dbReference type="InterPro" id="IPR046885">
    <property type="entry name" value="MnmA-like_C"/>
</dbReference>
<dbReference type="InterPro" id="IPR046884">
    <property type="entry name" value="MnmA-like_central"/>
</dbReference>
<dbReference type="InterPro" id="IPR023382">
    <property type="entry name" value="MnmA-like_central_sf"/>
</dbReference>
<dbReference type="InterPro" id="IPR014729">
    <property type="entry name" value="Rossmann-like_a/b/a_fold"/>
</dbReference>
<dbReference type="NCBIfam" id="NF001138">
    <property type="entry name" value="PRK00143.1"/>
    <property type="match status" value="1"/>
</dbReference>
<dbReference type="NCBIfam" id="TIGR00420">
    <property type="entry name" value="trmU"/>
    <property type="match status" value="1"/>
</dbReference>
<dbReference type="PANTHER" id="PTHR11933:SF5">
    <property type="entry name" value="MITOCHONDRIAL TRNA-SPECIFIC 2-THIOURIDYLASE 1"/>
    <property type="match status" value="1"/>
</dbReference>
<dbReference type="PANTHER" id="PTHR11933">
    <property type="entry name" value="TRNA 5-METHYLAMINOMETHYL-2-THIOURIDYLATE -METHYLTRANSFERASE"/>
    <property type="match status" value="1"/>
</dbReference>
<dbReference type="Pfam" id="PF03054">
    <property type="entry name" value="tRNA_Me_trans"/>
    <property type="match status" value="1"/>
</dbReference>
<dbReference type="Pfam" id="PF20258">
    <property type="entry name" value="tRNA_Me_trans_C"/>
    <property type="match status" value="1"/>
</dbReference>
<dbReference type="Pfam" id="PF20259">
    <property type="entry name" value="tRNA_Me_trans_M"/>
    <property type="match status" value="1"/>
</dbReference>
<dbReference type="SUPFAM" id="SSF52402">
    <property type="entry name" value="Adenine nucleotide alpha hydrolases-like"/>
    <property type="match status" value="1"/>
</dbReference>
<gene>
    <name evidence="1" type="primary">mnmA</name>
    <name type="synonym">trmU</name>
    <name type="ordered locus">Cgl1240</name>
    <name type="ordered locus">cg1397</name>
</gene>
<evidence type="ECO:0000255" key="1">
    <source>
        <dbReference type="HAMAP-Rule" id="MF_00144"/>
    </source>
</evidence>
<comment type="function">
    <text evidence="1">Catalyzes the 2-thiolation of uridine at the wobble position (U34) of tRNA, leading to the formation of s(2)U34.</text>
</comment>
<comment type="catalytic activity">
    <reaction evidence="1">
        <text>S-sulfanyl-L-cysteinyl-[protein] + uridine(34) in tRNA + AH2 + ATP = 2-thiouridine(34) in tRNA + L-cysteinyl-[protein] + A + AMP + diphosphate + H(+)</text>
        <dbReference type="Rhea" id="RHEA:47032"/>
        <dbReference type="Rhea" id="RHEA-COMP:10131"/>
        <dbReference type="Rhea" id="RHEA-COMP:11726"/>
        <dbReference type="Rhea" id="RHEA-COMP:11727"/>
        <dbReference type="Rhea" id="RHEA-COMP:11728"/>
        <dbReference type="ChEBI" id="CHEBI:13193"/>
        <dbReference type="ChEBI" id="CHEBI:15378"/>
        <dbReference type="ChEBI" id="CHEBI:17499"/>
        <dbReference type="ChEBI" id="CHEBI:29950"/>
        <dbReference type="ChEBI" id="CHEBI:30616"/>
        <dbReference type="ChEBI" id="CHEBI:33019"/>
        <dbReference type="ChEBI" id="CHEBI:61963"/>
        <dbReference type="ChEBI" id="CHEBI:65315"/>
        <dbReference type="ChEBI" id="CHEBI:87170"/>
        <dbReference type="ChEBI" id="CHEBI:456215"/>
        <dbReference type="EC" id="2.8.1.13"/>
    </reaction>
</comment>
<comment type="subcellular location">
    <subcellularLocation>
        <location evidence="1">Cytoplasm</location>
    </subcellularLocation>
</comment>
<comment type="similarity">
    <text evidence="1">Belongs to the MnmA/TRMU family.</text>
</comment>
<accession>Q8NR24</accession>
<reference key="1">
    <citation type="journal article" date="2003" name="Appl. Microbiol. Biotechnol.">
        <title>The Corynebacterium glutamicum genome: features and impacts on biotechnological processes.</title>
        <authorList>
            <person name="Ikeda M."/>
            <person name="Nakagawa S."/>
        </authorList>
    </citation>
    <scope>NUCLEOTIDE SEQUENCE [LARGE SCALE GENOMIC DNA]</scope>
    <source>
        <strain>ATCC 13032 / DSM 20300 / JCM 1318 / BCRC 11384 / CCUG 27702 / LMG 3730 / NBRC 12168 / NCIMB 10025 / NRRL B-2784 / 534</strain>
    </source>
</reference>
<reference key="2">
    <citation type="journal article" date="2003" name="J. Biotechnol.">
        <title>The complete Corynebacterium glutamicum ATCC 13032 genome sequence and its impact on the production of L-aspartate-derived amino acids and vitamins.</title>
        <authorList>
            <person name="Kalinowski J."/>
            <person name="Bathe B."/>
            <person name="Bartels D."/>
            <person name="Bischoff N."/>
            <person name="Bott M."/>
            <person name="Burkovski A."/>
            <person name="Dusch N."/>
            <person name="Eggeling L."/>
            <person name="Eikmanns B.J."/>
            <person name="Gaigalat L."/>
            <person name="Goesmann A."/>
            <person name="Hartmann M."/>
            <person name="Huthmacher K."/>
            <person name="Kraemer R."/>
            <person name="Linke B."/>
            <person name="McHardy A.C."/>
            <person name="Meyer F."/>
            <person name="Moeckel B."/>
            <person name="Pfefferle W."/>
            <person name="Puehler A."/>
            <person name="Rey D.A."/>
            <person name="Rueckert C."/>
            <person name="Rupp O."/>
            <person name="Sahm H."/>
            <person name="Wendisch V.F."/>
            <person name="Wiegraebe I."/>
            <person name="Tauch A."/>
        </authorList>
    </citation>
    <scope>NUCLEOTIDE SEQUENCE [LARGE SCALE GENOMIC DNA]</scope>
    <source>
        <strain>ATCC 13032 / DSM 20300 / JCM 1318 / BCRC 11384 / CCUG 27702 / LMG 3730 / NBRC 12168 / NCIMB 10025 / NRRL B-2784 / 534</strain>
    </source>
</reference>